<protein>
    <recommendedName>
        <fullName evidence="1">S-adenosylmethionine:tRNA ribosyltransferase-isomerase</fullName>
        <ecNumber evidence="1">2.4.99.17</ecNumber>
    </recommendedName>
    <alternativeName>
        <fullName evidence="1">Queuosine biosynthesis protein QueA</fullName>
    </alternativeName>
</protein>
<keyword id="KW-0963">Cytoplasm</keyword>
<keyword id="KW-0671">Queuosine biosynthesis</keyword>
<keyword id="KW-0949">S-adenosyl-L-methionine</keyword>
<keyword id="KW-0808">Transferase</keyword>
<gene>
    <name evidence="1" type="primary">queA</name>
    <name type="ordered locus">Bamb_0613</name>
</gene>
<comment type="function">
    <text evidence="1">Transfers and isomerizes the ribose moiety from AdoMet to the 7-aminomethyl group of 7-deazaguanine (preQ1-tRNA) to give epoxyqueuosine (oQ-tRNA).</text>
</comment>
<comment type="catalytic activity">
    <reaction evidence="1">
        <text>7-aminomethyl-7-carbaguanosine(34) in tRNA + S-adenosyl-L-methionine = epoxyqueuosine(34) in tRNA + adenine + L-methionine + 2 H(+)</text>
        <dbReference type="Rhea" id="RHEA:32155"/>
        <dbReference type="Rhea" id="RHEA-COMP:10342"/>
        <dbReference type="Rhea" id="RHEA-COMP:18582"/>
        <dbReference type="ChEBI" id="CHEBI:15378"/>
        <dbReference type="ChEBI" id="CHEBI:16708"/>
        <dbReference type="ChEBI" id="CHEBI:57844"/>
        <dbReference type="ChEBI" id="CHEBI:59789"/>
        <dbReference type="ChEBI" id="CHEBI:82833"/>
        <dbReference type="ChEBI" id="CHEBI:194443"/>
        <dbReference type="EC" id="2.4.99.17"/>
    </reaction>
</comment>
<comment type="pathway">
    <text evidence="1">tRNA modification; tRNA-queuosine biosynthesis.</text>
</comment>
<comment type="subunit">
    <text evidence="1">Monomer.</text>
</comment>
<comment type="subcellular location">
    <subcellularLocation>
        <location evidence="1">Cytoplasm</location>
    </subcellularLocation>
</comment>
<comment type="similarity">
    <text evidence="1">Belongs to the QueA family.</text>
</comment>
<accession>Q0BI51</accession>
<sequence length="355" mass="39090">MFTLSDFDFNLPPELIAQTALPERTASRLLEVDHTVEPARLVDRNFVELPSCIAPGDLLVFNDTRVLKARFFGQKASGGKIEVLIERVTGTHTALAQIRASKSPGTGTTLRLADAFDVTVGERVEPFFTLHFPQPCLTLIEQHGRLPLPPYIEHDADANDETRYQTVYASNPGAVAAPTAGLHFDLPLLEQLDAMGVERATLTLHVGAGTFQPVRVENIAEHRMHSEWYDLPQSLVDKIAATRARGGNVIAVGTTSMRALEAAARSADEAGRPLAATQAETDIFITPGYRFRVVDRLVTNFHLPKSTLLMLVSAFAGVETIRAAYRHAIDERYRFFSYGDAMLLTRRDTPEAPQA</sequence>
<name>QUEA_BURCM</name>
<feature type="chain" id="PRO_1000015187" description="S-adenosylmethionine:tRNA ribosyltransferase-isomerase">
    <location>
        <begin position="1"/>
        <end position="355"/>
    </location>
</feature>
<dbReference type="EC" id="2.4.99.17" evidence="1"/>
<dbReference type="EMBL" id="CP000440">
    <property type="protein sequence ID" value="ABI86172.1"/>
    <property type="molecule type" value="Genomic_DNA"/>
</dbReference>
<dbReference type="RefSeq" id="WP_011656009.1">
    <property type="nucleotide sequence ID" value="NC_008390.1"/>
</dbReference>
<dbReference type="SMR" id="Q0BI51"/>
<dbReference type="GeneID" id="93083973"/>
<dbReference type="KEGG" id="bam:Bamb_0613"/>
<dbReference type="PATRIC" id="fig|339670.21.peg.984"/>
<dbReference type="eggNOG" id="COG0809">
    <property type="taxonomic scope" value="Bacteria"/>
</dbReference>
<dbReference type="UniPathway" id="UPA00392"/>
<dbReference type="Proteomes" id="UP000000662">
    <property type="component" value="Chromosome 1"/>
</dbReference>
<dbReference type="GO" id="GO:0005737">
    <property type="term" value="C:cytoplasm"/>
    <property type="evidence" value="ECO:0007669"/>
    <property type="project" value="UniProtKB-SubCell"/>
</dbReference>
<dbReference type="GO" id="GO:0051075">
    <property type="term" value="F:S-adenosylmethionine:tRNA ribosyltransferase-isomerase activity"/>
    <property type="evidence" value="ECO:0007669"/>
    <property type="project" value="UniProtKB-EC"/>
</dbReference>
<dbReference type="GO" id="GO:0008616">
    <property type="term" value="P:queuosine biosynthetic process"/>
    <property type="evidence" value="ECO:0007669"/>
    <property type="project" value="UniProtKB-UniRule"/>
</dbReference>
<dbReference type="GO" id="GO:0002099">
    <property type="term" value="P:tRNA wobble guanine modification"/>
    <property type="evidence" value="ECO:0007669"/>
    <property type="project" value="TreeGrafter"/>
</dbReference>
<dbReference type="FunFam" id="3.40.1780.10:FF:000001">
    <property type="entry name" value="S-adenosylmethionine:tRNA ribosyltransferase-isomerase"/>
    <property type="match status" value="1"/>
</dbReference>
<dbReference type="Gene3D" id="2.40.10.240">
    <property type="entry name" value="QueA-like"/>
    <property type="match status" value="1"/>
</dbReference>
<dbReference type="Gene3D" id="3.40.1780.10">
    <property type="entry name" value="QueA-like"/>
    <property type="match status" value="1"/>
</dbReference>
<dbReference type="HAMAP" id="MF_00113">
    <property type="entry name" value="QueA"/>
    <property type="match status" value="1"/>
</dbReference>
<dbReference type="InterPro" id="IPR003699">
    <property type="entry name" value="QueA"/>
</dbReference>
<dbReference type="InterPro" id="IPR042118">
    <property type="entry name" value="QueA_dom1"/>
</dbReference>
<dbReference type="InterPro" id="IPR042119">
    <property type="entry name" value="QueA_dom2"/>
</dbReference>
<dbReference type="InterPro" id="IPR036100">
    <property type="entry name" value="QueA_sf"/>
</dbReference>
<dbReference type="NCBIfam" id="NF001140">
    <property type="entry name" value="PRK00147.1"/>
    <property type="match status" value="1"/>
</dbReference>
<dbReference type="NCBIfam" id="TIGR00113">
    <property type="entry name" value="queA"/>
    <property type="match status" value="1"/>
</dbReference>
<dbReference type="PANTHER" id="PTHR30307">
    <property type="entry name" value="S-ADENOSYLMETHIONINE:TRNA RIBOSYLTRANSFERASE-ISOMERASE"/>
    <property type="match status" value="1"/>
</dbReference>
<dbReference type="PANTHER" id="PTHR30307:SF0">
    <property type="entry name" value="S-ADENOSYLMETHIONINE:TRNA RIBOSYLTRANSFERASE-ISOMERASE"/>
    <property type="match status" value="1"/>
</dbReference>
<dbReference type="Pfam" id="PF02547">
    <property type="entry name" value="Queuosine_synth"/>
    <property type="match status" value="1"/>
</dbReference>
<dbReference type="SUPFAM" id="SSF111337">
    <property type="entry name" value="QueA-like"/>
    <property type="match status" value="1"/>
</dbReference>
<evidence type="ECO:0000255" key="1">
    <source>
        <dbReference type="HAMAP-Rule" id="MF_00113"/>
    </source>
</evidence>
<organism>
    <name type="scientific">Burkholderia ambifaria (strain ATCC BAA-244 / DSM 16087 / CCUG 44356 / LMG 19182 / AMMD)</name>
    <name type="common">Burkholderia cepacia (strain AMMD)</name>
    <dbReference type="NCBI Taxonomy" id="339670"/>
    <lineage>
        <taxon>Bacteria</taxon>
        <taxon>Pseudomonadati</taxon>
        <taxon>Pseudomonadota</taxon>
        <taxon>Betaproteobacteria</taxon>
        <taxon>Burkholderiales</taxon>
        <taxon>Burkholderiaceae</taxon>
        <taxon>Burkholderia</taxon>
        <taxon>Burkholderia cepacia complex</taxon>
    </lineage>
</organism>
<proteinExistence type="inferred from homology"/>
<reference key="1">
    <citation type="submission" date="2006-08" db="EMBL/GenBank/DDBJ databases">
        <title>Complete sequence of chromosome 1 of Burkholderia cepacia AMMD.</title>
        <authorList>
            <person name="Copeland A."/>
            <person name="Lucas S."/>
            <person name="Lapidus A."/>
            <person name="Barry K."/>
            <person name="Detter J.C."/>
            <person name="Glavina del Rio T."/>
            <person name="Hammon N."/>
            <person name="Israni S."/>
            <person name="Pitluck S."/>
            <person name="Bruce D."/>
            <person name="Chain P."/>
            <person name="Malfatti S."/>
            <person name="Shin M."/>
            <person name="Vergez L."/>
            <person name="Schmutz J."/>
            <person name="Larimer F."/>
            <person name="Land M."/>
            <person name="Hauser L."/>
            <person name="Kyrpides N."/>
            <person name="Kim E."/>
            <person name="Parke J."/>
            <person name="Coenye T."/>
            <person name="Konstantinidis K."/>
            <person name="Ramette A."/>
            <person name="Tiedje J."/>
            <person name="Richardson P."/>
        </authorList>
    </citation>
    <scope>NUCLEOTIDE SEQUENCE [LARGE SCALE GENOMIC DNA]</scope>
    <source>
        <strain>ATCC BAA-244 / DSM 16087 / CCUG 44356 / LMG 19182 / AMMD</strain>
    </source>
</reference>